<accession>Q98CL7</accession>
<organism>
    <name type="scientific">Mesorhizobium japonicum (strain LMG 29417 / CECT 9101 / MAFF 303099)</name>
    <name type="common">Mesorhizobium loti (strain MAFF 303099)</name>
    <dbReference type="NCBI Taxonomy" id="266835"/>
    <lineage>
        <taxon>Bacteria</taxon>
        <taxon>Pseudomonadati</taxon>
        <taxon>Pseudomonadota</taxon>
        <taxon>Alphaproteobacteria</taxon>
        <taxon>Hyphomicrobiales</taxon>
        <taxon>Phyllobacteriaceae</taxon>
        <taxon>Mesorhizobium</taxon>
    </lineage>
</organism>
<comment type="function">
    <text evidence="1">Involved in the gluconeogenesis. Catalyzes the conversion of oxaloacetate (OAA) to phosphoenolpyruvate (PEP) through direct phosphoryl transfer between the nucleoside triphosphate and OAA.</text>
</comment>
<comment type="catalytic activity">
    <reaction evidence="1">
        <text>oxaloacetate + ATP = phosphoenolpyruvate + ADP + CO2</text>
        <dbReference type="Rhea" id="RHEA:18617"/>
        <dbReference type="ChEBI" id="CHEBI:16452"/>
        <dbReference type="ChEBI" id="CHEBI:16526"/>
        <dbReference type="ChEBI" id="CHEBI:30616"/>
        <dbReference type="ChEBI" id="CHEBI:58702"/>
        <dbReference type="ChEBI" id="CHEBI:456216"/>
        <dbReference type="EC" id="4.1.1.49"/>
    </reaction>
</comment>
<comment type="cofactor">
    <cofactor evidence="1">
        <name>Mn(2+)</name>
        <dbReference type="ChEBI" id="CHEBI:29035"/>
    </cofactor>
    <text evidence="1">Binds 1 Mn(2+) ion per subunit.</text>
</comment>
<comment type="pathway">
    <text evidence="1">Carbohydrate biosynthesis; gluconeogenesis.</text>
</comment>
<comment type="subcellular location">
    <subcellularLocation>
        <location evidence="1">Cytoplasm</location>
    </subcellularLocation>
</comment>
<comment type="similarity">
    <text evidence="1">Belongs to the phosphoenolpyruvate carboxykinase (ATP) family.</text>
</comment>
<sequence>MSEVGKRNPACPIDRIGLKTTGMVRYNFGAAALYEEAIRRGEARLTAHGALVAETGQHTGRSPKDKFVVRDAATEPEVWWDNNKAISPAQFETLFADFLAHAANKDLYVQDLVGGADAELKLPTRVITEFAWHSLFIRNLLIRPDKAELGQFVPEMTIIDLPSFRADPARHGSRTETVIAVDLTRQIVLIGGTSYAGEMKKSVFTMLNYILPQKGVMPMHCSANEGPAGDAAVFFGLSGTGKTTLSADPSRTLIGDDEHGWGPHGIFNFEGGCYAKTIKLSAEAEPEIFATTQRFGTVLENVVLDADGVPDFNDGRLTENTRCAYPLDFIPNASKTGRASHPKNIIMLTADAFGVMPPIARLTPAQAMYHFLSGYTAKVAGTEKGVTEPEATFSTCFGAPFMPRHPSEYGNLLRELIASHGADCWLVNTGWTGGAYGTGKRMPIKATRALLTAALDGSLKTGEFRTDANFGFEVPVAVPGVDSAILDPRSTWADKPAYDRQAARLVGMFAVNFEKFEPHVDATVMGAAPRMQEAAE</sequence>
<gene>
    <name evidence="1" type="primary">pckA</name>
    <name type="ordered locus">mlr5096</name>
</gene>
<protein>
    <recommendedName>
        <fullName evidence="1">Phosphoenolpyruvate carboxykinase (ATP)</fullName>
        <shortName evidence="1">PCK</shortName>
        <shortName evidence="1">PEP carboxykinase</shortName>
        <shortName evidence="1">PEPCK</shortName>
        <ecNumber evidence="1">4.1.1.49</ecNumber>
    </recommendedName>
</protein>
<evidence type="ECO:0000255" key="1">
    <source>
        <dbReference type="HAMAP-Rule" id="MF_00453"/>
    </source>
</evidence>
<feature type="chain" id="PRO_0000203835" description="Phosphoenolpyruvate carboxykinase (ATP)">
    <location>
        <begin position="1"/>
        <end position="536"/>
    </location>
</feature>
<feature type="binding site" evidence="1">
    <location>
        <position position="61"/>
    </location>
    <ligand>
        <name>substrate</name>
    </ligand>
</feature>
<feature type="binding site" evidence="1">
    <location>
        <position position="195"/>
    </location>
    <ligand>
        <name>substrate</name>
    </ligand>
</feature>
<feature type="binding site" evidence="1">
    <location>
        <position position="201"/>
    </location>
    <ligand>
        <name>ATP</name>
        <dbReference type="ChEBI" id="CHEBI:30616"/>
    </ligand>
</feature>
<feature type="binding site" evidence="1">
    <location>
        <position position="201"/>
    </location>
    <ligand>
        <name>Mn(2+)</name>
        <dbReference type="ChEBI" id="CHEBI:29035"/>
    </ligand>
</feature>
<feature type="binding site" evidence="1">
    <location>
        <position position="201"/>
    </location>
    <ligand>
        <name>substrate</name>
    </ligand>
</feature>
<feature type="binding site" evidence="1">
    <location>
        <position position="220"/>
    </location>
    <ligand>
        <name>ATP</name>
        <dbReference type="ChEBI" id="CHEBI:30616"/>
    </ligand>
</feature>
<feature type="binding site" evidence="1">
    <location>
        <position position="220"/>
    </location>
    <ligand>
        <name>Mn(2+)</name>
        <dbReference type="ChEBI" id="CHEBI:29035"/>
    </ligand>
</feature>
<feature type="binding site" evidence="1">
    <location>
        <begin position="236"/>
        <end position="244"/>
    </location>
    <ligand>
        <name>ATP</name>
        <dbReference type="ChEBI" id="CHEBI:30616"/>
    </ligand>
</feature>
<feature type="binding site" evidence="1">
    <location>
        <position position="257"/>
    </location>
    <ligand>
        <name>Mn(2+)</name>
        <dbReference type="ChEBI" id="CHEBI:29035"/>
    </ligand>
</feature>
<feature type="binding site" evidence="1">
    <location>
        <position position="285"/>
    </location>
    <ligand>
        <name>ATP</name>
        <dbReference type="ChEBI" id="CHEBI:30616"/>
    </ligand>
</feature>
<feature type="binding site" evidence="1">
    <location>
        <position position="322"/>
    </location>
    <ligand>
        <name>ATP</name>
        <dbReference type="ChEBI" id="CHEBI:30616"/>
    </ligand>
</feature>
<feature type="binding site" evidence="1">
    <location>
        <position position="322"/>
    </location>
    <ligand>
        <name>substrate</name>
    </ligand>
</feature>
<feature type="binding site" evidence="1">
    <location>
        <position position="447"/>
    </location>
    <ligand>
        <name>ATP</name>
        <dbReference type="ChEBI" id="CHEBI:30616"/>
    </ligand>
</feature>
<dbReference type="EC" id="4.1.1.49" evidence="1"/>
<dbReference type="EMBL" id="BA000012">
    <property type="protein sequence ID" value="BAB51604.1"/>
    <property type="molecule type" value="Genomic_DNA"/>
</dbReference>
<dbReference type="RefSeq" id="WP_010912943.1">
    <property type="nucleotide sequence ID" value="NC_002678.2"/>
</dbReference>
<dbReference type="SMR" id="Q98CL7"/>
<dbReference type="KEGG" id="mlo:mlr5096"/>
<dbReference type="eggNOG" id="COG1866">
    <property type="taxonomic scope" value="Bacteria"/>
</dbReference>
<dbReference type="HOGENOM" id="CLU_018247_0_1_5"/>
<dbReference type="UniPathway" id="UPA00138"/>
<dbReference type="Proteomes" id="UP000000552">
    <property type="component" value="Chromosome"/>
</dbReference>
<dbReference type="GO" id="GO:0005829">
    <property type="term" value="C:cytosol"/>
    <property type="evidence" value="ECO:0007669"/>
    <property type="project" value="TreeGrafter"/>
</dbReference>
<dbReference type="GO" id="GO:0005524">
    <property type="term" value="F:ATP binding"/>
    <property type="evidence" value="ECO:0007669"/>
    <property type="project" value="UniProtKB-UniRule"/>
</dbReference>
<dbReference type="GO" id="GO:0046872">
    <property type="term" value="F:metal ion binding"/>
    <property type="evidence" value="ECO:0007669"/>
    <property type="project" value="UniProtKB-KW"/>
</dbReference>
<dbReference type="GO" id="GO:0004612">
    <property type="term" value="F:phosphoenolpyruvate carboxykinase (ATP) activity"/>
    <property type="evidence" value="ECO:0007669"/>
    <property type="project" value="UniProtKB-UniRule"/>
</dbReference>
<dbReference type="GO" id="GO:0006094">
    <property type="term" value="P:gluconeogenesis"/>
    <property type="evidence" value="ECO:0007669"/>
    <property type="project" value="UniProtKB-UniRule"/>
</dbReference>
<dbReference type="CDD" id="cd00484">
    <property type="entry name" value="PEPCK_ATP"/>
    <property type="match status" value="1"/>
</dbReference>
<dbReference type="Gene3D" id="3.90.228.20">
    <property type="match status" value="1"/>
</dbReference>
<dbReference type="Gene3D" id="3.40.449.10">
    <property type="entry name" value="Phosphoenolpyruvate Carboxykinase, domain 1"/>
    <property type="match status" value="1"/>
</dbReference>
<dbReference type="Gene3D" id="2.170.8.10">
    <property type="entry name" value="Phosphoenolpyruvate Carboxykinase, domain 2"/>
    <property type="match status" value="1"/>
</dbReference>
<dbReference type="HAMAP" id="MF_00453">
    <property type="entry name" value="PEPCK_ATP"/>
    <property type="match status" value="1"/>
</dbReference>
<dbReference type="InterPro" id="IPR001272">
    <property type="entry name" value="PEP_carboxykinase_ATP"/>
</dbReference>
<dbReference type="InterPro" id="IPR013035">
    <property type="entry name" value="PEP_carboxykinase_C"/>
</dbReference>
<dbReference type="InterPro" id="IPR008210">
    <property type="entry name" value="PEP_carboxykinase_N"/>
</dbReference>
<dbReference type="InterPro" id="IPR015994">
    <property type="entry name" value="PEPCK_ATP_CS"/>
</dbReference>
<dbReference type="NCBIfam" id="TIGR00224">
    <property type="entry name" value="pckA"/>
    <property type="match status" value="1"/>
</dbReference>
<dbReference type="NCBIfam" id="NF006820">
    <property type="entry name" value="PRK09344.1-2"/>
    <property type="match status" value="1"/>
</dbReference>
<dbReference type="NCBIfam" id="NF006821">
    <property type="entry name" value="PRK09344.1-3"/>
    <property type="match status" value="1"/>
</dbReference>
<dbReference type="NCBIfam" id="NF006822">
    <property type="entry name" value="PRK09344.1-4"/>
    <property type="match status" value="1"/>
</dbReference>
<dbReference type="PANTHER" id="PTHR30031:SF0">
    <property type="entry name" value="PHOSPHOENOLPYRUVATE CARBOXYKINASE (ATP)"/>
    <property type="match status" value="1"/>
</dbReference>
<dbReference type="PANTHER" id="PTHR30031">
    <property type="entry name" value="PHOSPHOENOLPYRUVATE CARBOXYKINASE ATP"/>
    <property type="match status" value="1"/>
</dbReference>
<dbReference type="Pfam" id="PF01293">
    <property type="entry name" value="PEPCK_ATP"/>
    <property type="match status" value="1"/>
</dbReference>
<dbReference type="PIRSF" id="PIRSF006294">
    <property type="entry name" value="PEP_crbxkin"/>
    <property type="match status" value="1"/>
</dbReference>
<dbReference type="SUPFAM" id="SSF68923">
    <property type="entry name" value="PEP carboxykinase N-terminal domain"/>
    <property type="match status" value="1"/>
</dbReference>
<dbReference type="SUPFAM" id="SSF53795">
    <property type="entry name" value="PEP carboxykinase-like"/>
    <property type="match status" value="1"/>
</dbReference>
<dbReference type="PROSITE" id="PS00532">
    <property type="entry name" value="PEPCK_ATP"/>
    <property type="match status" value="1"/>
</dbReference>
<keyword id="KW-0067">ATP-binding</keyword>
<keyword id="KW-0963">Cytoplasm</keyword>
<keyword id="KW-0210">Decarboxylase</keyword>
<keyword id="KW-0312">Gluconeogenesis</keyword>
<keyword id="KW-0456">Lyase</keyword>
<keyword id="KW-0464">Manganese</keyword>
<keyword id="KW-0479">Metal-binding</keyword>
<keyword id="KW-0547">Nucleotide-binding</keyword>
<name>PCKA_RHILO</name>
<proteinExistence type="inferred from homology"/>
<reference key="1">
    <citation type="journal article" date="2000" name="DNA Res.">
        <title>Complete genome structure of the nitrogen-fixing symbiotic bacterium Mesorhizobium loti.</title>
        <authorList>
            <person name="Kaneko T."/>
            <person name="Nakamura Y."/>
            <person name="Sato S."/>
            <person name="Asamizu E."/>
            <person name="Kato T."/>
            <person name="Sasamoto S."/>
            <person name="Watanabe A."/>
            <person name="Idesawa K."/>
            <person name="Ishikawa A."/>
            <person name="Kawashima K."/>
            <person name="Kimura T."/>
            <person name="Kishida Y."/>
            <person name="Kiyokawa C."/>
            <person name="Kohara M."/>
            <person name="Matsumoto M."/>
            <person name="Matsuno A."/>
            <person name="Mochizuki Y."/>
            <person name="Nakayama S."/>
            <person name="Nakazaki N."/>
            <person name="Shimpo S."/>
            <person name="Sugimoto M."/>
            <person name="Takeuchi C."/>
            <person name="Yamada M."/>
            <person name="Tabata S."/>
        </authorList>
    </citation>
    <scope>NUCLEOTIDE SEQUENCE [LARGE SCALE GENOMIC DNA]</scope>
    <source>
        <strain>LMG 29417 / CECT 9101 / MAFF 303099</strain>
    </source>
</reference>